<feature type="chain" id="PRO_0000238578" description="Transcription elongation factor spt-6">
    <location>
        <begin position="1"/>
        <end position="1402"/>
    </location>
</feature>
<feature type="domain" description="S1 motif" evidence="2">
    <location>
        <begin position="1094"/>
        <end position="1161"/>
    </location>
</feature>
<feature type="domain" description="SH2">
    <location>
        <begin position="1209"/>
        <end position="1306"/>
    </location>
</feature>
<feature type="region of interest" description="Disordered" evidence="3">
    <location>
        <begin position="1"/>
        <end position="199"/>
    </location>
</feature>
<feature type="compositionally biased region" description="Acidic residues" evidence="3">
    <location>
        <begin position="10"/>
        <end position="28"/>
    </location>
</feature>
<feature type="compositionally biased region" description="Acidic residues" evidence="3">
    <location>
        <begin position="40"/>
        <end position="52"/>
    </location>
</feature>
<feature type="compositionally biased region" description="Acidic residues" evidence="3">
    <location>
        <begin position="62"/>
        <end position="75"/>
    </location>
</feature>
<feature type="compositionally biased region" description="Acidic residues" evidence="3">
    <location>
        <begin position="90"/>
        <end position="102"/>
    </location>
</feature>
<feature type="compositionally biased region" description="Basic and acidic residues" evidence="3">
    <location>
        <begin position="123"/>
        <end position="135"/>
    </location>
</feature>
<feature type="compositionally biased region" description="Acidic residues" evidence="3">
    <location>
        <begin position="161"/>
        <end position="176"/>
    </location>
</feature>
<feature type="compositionally biased region" description="Basic and acidic residues" evidence="3">
    <location>
        <begin position="177"/>
        <end position="199"/>
    </location>
</feature>
<feature type="sequence conflict" description="In Ref. 1; EAA29618." evidence="4" ref="1">
    <original>Q</original>
    <variation>QQTKFK</variation>
    <location>
        <position position="117"/>
    </location>
</feature>
<organism>
    <name type="scientific">Neurospora crassa (strain ATCC 24698 / 74-OR23-1A / CBS 708.71 / DSM 1257 / FGSC 987)</name>
    <dbReference type="NCBI Taxonomy" id="367110"/>
    <lineage>
        <taxon>Eukaryota</taxon>
        <taxon>Fungi</taxon>
        <taxon>Dikarya</taxon>
        <taxon>Ascomycota</taxon>
        <taxon>Pezizomycotina</taxon>
        <taxon>Sordariomycetes</taxon>
        <taxon>Sordariomycetidae</taxon>
        <taxon>Sordariales</taxon>
        <taxon>Sordariaceae</taxon>
        <taxon>Neurospora</taxon>
    </lineage>
</organism>
<comment type="function">
    <text evidence="1">Histone H3-H4 chaperone that plays a role in maintenance of chromatin structure during RNA polymerase II transcription elongation thereby repressing transcription initiation from cryptic promoters. Mediates the reassembly of nucleosomes onto the promoters of at least a selected set of genes during repression; the nucleosome reassembly is essential for transcriptional repression. Essential for viability.</text>
</comment>
<comment type="subcellular location">
    <subcellularLocation>
        <location evidence="1">Nucleus</location>
    </subcellularLocation>
    <subcellularLocation>
        <location evidence="1">Chromosome</location>
    </subcellularLocation>
</comment>
<comment type="similarity">
    <text evidence="4">Belongs to the SPT6 family.</text>
</comment>
<dbReference type="EMBL" id="AL807374">
    <property type="protein sequence ID" value="CAD37051.1"/>
    <property type="molecule type" value="Genomic_DNA"/>
</dbReference>
<dbReference type="EMBL" id="CM002240">
    <property type="protein sequence ID" value="EAA29618.1"/>
    <property type="molecule type" value="Genomic_DNA"/>
</dbReference>
<dbReference type="RefSeq" id="XP_958854.1">
    <property type="nucleotide sequence ID" value="XM_953761.2"/>
</dbReference>
<dbReference type="SMR" id="Q8NIV6"/>
<dbReference type="FunCoup" id="Q8NIV6">
    <property type="interactions" value="1170"/>
</dbReference>
<dbReference type="STRING" id="367110.Q8NIV6"/>
<dbReference type="PaxDb" id="5141-EFNCRP00000005865"/>
<dbReference type="EnsemblFungi" id="EAA29618">
    <property type="protein sequence ID" value="EAA29618"/>
    <property type="gene ID" value="NCU04611"/>
</dbReference>
<dbReference type="GeneID" id="3875001"/>
<dbReference type="KEGG" id="ncr:NCU04611"/>
<dbReference type="HOGENOM" id="CLU_001680_0_1_1"/>
<dbReference type="InParanoid" id="Q8NIV6"/>
<dbReference type="OrthoDB" id="995477at2759"/>
<dbReference type="Proteomes" id="UP000001805">
    <property type="component" value="Chromosome 2, Linkage Group V"/>
</dbReference>
<dbReference type="GO" id="GO:0000791">
    <property type="term" value="C:euchromatin"/>
    <property type="evidence" value="ECO:0007669"/>
    <property type="project" value="EnsemblFungi"/>
</dbReference>
<dbReference type="GO" id="GO:0005721">
    <property type="term" value="C:pericentric heterochromatin"/>
    <property type="evidence" value="ECO:0007669"/>
    <property type="project" value="EnsemblFungi"/>
</dbReference>
<dbReference type="GO" id="GO:0008023">
    <property type="term" value="C:transcription elongation factor complex"/>
    <property type="evidence" value="ECO:0000318"/>
    <property type="project" value="GO_Central"/>
</dbReference>
<dbReference type="GO" id="GO:0003677">
    <property type="term" value="F:DNA binding"/>
    <property type="evidence" value="ECO:0007669"/>
    <property type="project" value="InterPro"/>
</dbReference>
<dbReference type="GO" id="GO:0042393">
    <property type="term" value="F:histone binding"/>
    <property type="evidence" value="ECO:0000318"/>
    <property type="project" value="GO_Central"/>
</dbReference>
<dbReference type="GO" id="GO:0031491">
    <property type="term" value="F:nucleosome binding"/>
    <property type="evidence" value="ECO:0000318"/>
    <property type="project" value="GO_Central"/>
</dbReference>
<dbReference type="GO" id="GO:0001073">
    <property type="term" value="F:transcription antitermination factor activity, DNA binding"/>
    <property type="evidence" value="ECO:0007669"/>
    <property type="project" value="EnsemblFungi"/>
</dbReference>
<dbReference type="GO" id="GO:0033554">
    <property type="term" value="P:cellular response to stress"/>
    <property type="evidence" value="ECO:0007669"/>
    <property type="project" value="EnsemblFungi"/>
</dbReference>
<dbReference type="GO" id="GO:0000082">
    <property type="term" value="P:G1/S transition of mitotic cell cycle"/>
    <property type="evidence" value="ECO:0007669"/>
    <property type="project" value="EnsemblFungi"/>
</dbReference>
<dbReference type="GO" id="GO:0000122">
    <property type="term" value="P:negative regulation of transcription by RNA polymerase II"/>
    <property type="evidence" value="ECO:0007669"/>
    <property type="project" value="EnsemblFungi"/>
</dbReference>
<dbReference type="GO" id="GO:0006334">
    <property type="term" value="P:nucleosome assembly"/>
    <property type="evidence" value="ECO:0007669"/>
    <property type="project" value="EnsemblFungi"/>
</dbReference>
<dbReference type="GO" id="GO:0034728">
    <property type="term" value="P:nucleosome organization"/>
    <property type="evidence" value="ECO:0000318"/>
    <property type="project" value="GO_Central"/>
</dbReference>
<dbReference type="GO" id="GO:0016973">
    <property type="term" value="P:poly(A)+ mRNA export from nucleus"/>
    <property type="evidence" value="ECO:0007669"/>
    <property type="project" value="EnsemblFungi"/>
</dbReference>
<dbReference type="GO" id="GO:0032968">
    <property type="term" value="P:positive regulation of transcription elongation by RNA polymerase II"/>
    <property type="evidence" value="ECO:0007669"/>
    <property type="project" value="EnsemblFungi"/>
</dbReference>
<dbReference type="GO" id="GO:0031440">
    <property type="term" value="P:regulation of mRNA 3'-end processing"/>
    <property type="evidence" value="ECO:0007669"/>
    <property type="project" value="EnsemblFungi"/>
</dbReference>
<dbReference type="GO" id="GO:0006368">
    <property type="term" value="P:transcription elongation by RNA polymerase II"/>
    <property type="evidence" value="ECO:0000318"/>
    <property type="project" value="GO_Central"/>
</dbReference>
<dbReference type="GO" id="GO:0140673">
    <property type="term" value="P:transcription elongation-coupled chromatin remodeling"/>
    <property type="evidence" value="ECO:0007669"/>
    <property type="project" value="EnsemblFungi"/>
</dbReference>
<dbReference type="CDD" id="cd09928">
    <property type="entry name" value="SH2_Cterm_SPT6_like"/>
    <property type="match status" value="1"/>
</dbReference>
<dbReference type="CDD" id="cd09918">
    <property type="entry name" value="SH2_Nterm_SPT6_like"/>
    <property type="match status" value="1"/>
</dbReference>
<dbReference type="FunFam" id="3.30.420.140:FF:000007">
    <property type="entry name" value="Transcription elongation factor SPT6"/>
    <property type="match status" value="1"/>
</dbReference>
<dbReference type="FunFam" id="3.30.505.10:FF:000065">
    <property type="entry name" value="Transcription elongation factor SPT6"/>
    <property type="match status" value="1"/>
</dbReference>
<dbReference type="FunFam" id="1.10.10.2740:FF:000002">
    <property type="entry name" value="Transcription elongation factor Spt6"/>
    <property type="match status" value="1"/>
</dbReference>
<dbReference type="FunFam" id="1.10.10.650:FF:000004">
    <property type="entry name" value="Transcription elongation factor Spt6"/>
    <property type="match status" value="1"/>
</dbReference>
<dbReference type="FunFam" id="2.40.50.140:FF:000383">
    <property type="entry name" value="Transcription elongation factor Spt6"/>
    <property type="match status" value="1"/>
</dbReference>
<dbReference type="FunFam" id="3.30.505.10:FF:000056">
    <property type="entry name" value="Transcription elongation factor Spt6"/>
    <property type="match status" value="1"/>
</dbReference>
<dbReference type="Gene3D" id="2.40.50.140">
    <property type="entry name" value="Nucleic acid-binding proteins"/>
    <property type="match status" value="1"/>
</dbReference>
<dbReference type="Gene3D" id="1.10.10.650">
    <property type="entry name" value="RuvA domain 2-like"/>
    <property type="match status" value="1"/>
</dbReference>
<dbReference type="Gene3D" id="3.30.505.10">
    <property type="entry name" value="SH2 domain"/>
    <property type="match status" value="2"/>
</dbReference>
<dbReference type="Gene3D" id="1.10.10.2740">
    <property type="entry name" value="Spt6, Death-like domain"/>
    <property type="match status" value="1"/>
</dbReference>
<dbReference type="Gene3D" id="1.10.150.850">
    <property type="entry name" value="Spt6, helix-hairpin-helix domain"/>
    <property type="match status" value="1"/>
</dbReference>
<dbReference type="Gene3D" id="1.10.3500.10">
    <property type="entry name" value="Tex N-terminal region-like"/>
    <property type="match status" value="1"/>
</dbReference>
<dbReference type="Gene3D" id="3.30.420.140">
    <property type="entry name" value="YqgF/RNase H-like domain"/>
    <property type="match status" value="1"/>
</dbReference>
<dbReference type="InterPro" id="IPR041692">
    <property type="entry name" value="HHH_9"/>
</dbReference>
<dbReference type="InterPro" id="IPR012340">
    <property type="entry name" value="NA-bd_OB-fold"/>
</dbReference>
<dbReference type="InterPro" id="IPR012337">
    <property type="entry name" value="RNaseH-like_sf"/>
</dbReference>
<dbReference type="InterPro" id="IPR010994">
    <property type="entry name" value="RuvA_2-like"/>
</dbReference>
<dbReference type="InterPro" id="IPR003029">
    <property type="entry name" value="S1_domain"/>
</dbReference>
<dbReference type="InterPro" id="IPR036860">
    <property type="entry name" value="SH2_dom_sf"/>
</dbReference>
<dbReference type="InterPro" id="IPR049540">
    <property type="entry name" value="Spt6-like_S1"/>
</dbReference>
<dbReference type="InterPro" id="IPR028083">
    <property type="entry name" value="Spt6_acidic_N_dom"/>
</dbReference>
<dbReference type="InterPro" id="IPR042066">
    <property type="entry name" value="Spt6_death-like"/>
</dbReference>
<dbReference type="InterPro" id="IPR032706">
    <property type="entry name" value="Spt6_HHH"/>
</dbReference>
<dbReference type="InterPro" id="IPR028088">
    <property type="entry name" value="Spt6_HTH_DNA-bd_dom"/>
</dbReference>
<dbReference type="InterPro" id="IPR035420">
    <property type="entry name" value="Spt6_SH2"/>
</dbReference>
<dbReference type="InterPro" id="IPR035018">
    <property type="entry name" value="Spt6_SH2_C"/>
</dbReference>
<dbReference type="InterPro" id="IPR035019">
    <property type="entry name" value="Spt6_SH2_N"/>
</dbReference>
<dbReference type="InterPro" id="IPR028231">
    <property type="entry name" value="Spt6_YqgF"/>
</dbReference>
<dbReference type="InterPro" id="IPR055179">
    <property type="entry name" value="Tex-like_central_region"/>
</dbReference>
<dbReference type="InterPro" id="IPR023323">
    <property type="entry name" value="Tex-like_dom_sf"/>
</dbReference>
<dbReference type="InterPro" id="IPR023319">
    <property type="entry name" value="Tex-like_HTH_dom_sf"/>
</dbReference>
<dbReference type="InterPro" id="IPR017072">
    <property type="entry name" value="TF_Spt6"/>
</dbReference>
<dbReference type="InterPro" id="IPR037027">
    <property type="entry name" value="YqgF/RNaseH-like_dom_sf"/>
</dbReference>
<dbReference type="PANTHER" id="PTHR10145">
    <property type="entry name" value="TRANSCRIPTION ELONGATION FACTOR SPT6"/>
    <property type="match status" value="1"/>
</dbReference>
<dbReference type="PANTHER" id="PTHR10145:SF6">
    <property type="entry name" value="TRANSCRIPTION ELONGATION FACTOR SPT6"/>
    <property type="match status" value="1"/>
</dbReference>
<dbReference type="Pfam" id="PF14635">
    <property type="entry name" value="HHH_7"/>
    <property type="match status" value="1"/>
</dbReference>
<dbReference type="Pfam" id="PF17674">
    <property type="entry name" value="HHH_9"/>
    <property type="match status" value="1"/>
</dbReference>
<dbReference type="Pfam" id="PF14641">
    <property type="entry name" value="HTH_44"/>
    <property type="match status" value="1"/>
</dbReference>
<dbReference type="Pfam" id="PF14633">
    <property type="entry name" value="SH2_2"/>
    <property type="match status" value="1"/>
</dbReference>
<dbReference type="Pfam" id="PF14632">
    <property type="entry name" value="SPT6_acidic"/>
    <property type="match status" value="1"/>
</dbReference>
<dbReference type="Pfam" id="PF21710">
    <property type="entry name" value="Spt6_S1"/>
    <property type="match status" value="1"/>
</dbReference>
<dbReference type="Pfam" id="PF22706">
    <property type="entry name" value="Tex_central_region"/>
    <property type="match status" value="1"/>
</dbReference>
<dbReference type="Pfam" id="PF14639">
    <property type="entry name" value="YqgF"/>
    <property type="match status" value="1"/>
</dbReference>
<dbReference type="PIRSF" id="PIRSF036947">
    <property type="entry name" value="Spt6"/>
    <property type="match status" value="1"/>
</dbReference>
<dbReference type="SMART" id="SM00316">
    <property type="entry name" value="S1"/>
    <property type="match status" value="1"/>
</dbReference>
<dbReference type="SUPFAM" id="SSF50249">
    <property type="entry name" value="Nucleic acid-binding proteins"/>
    <property type="match status" value="1"/>
</dbReference>
<dbReference type="SUPFAM" id="SSF53098">
    <property type="entry name" value="Ribonuclease H-like"/>
    <property type="match status" value="1"/>
</dbReference>
<dbReference type="SUPFAM" id="SSF47781">
    <property type="entry name" value="RuvA domain 2-like"/>
    <property type="match status" value="2"/>
</dbReference>
<dbReference type="SUPFAM" id="SSF55550">
    <property type="entry name" value="SH2 domain"/>
    <property type="match status" value="1"/>
</dbReference>
<dbReference type="SUPFAM" id="SSF158832">
    <property type="entry name" value="Tex N-terminal region-like"/>
    <property type="match status" value="1"/>
</dbReference>
<dbReference type="PROSITE" id="PS50126">
    <property type="entry name" value="S1"/>
    <property type="match status" value="1"/>
</dbReference>
<sequence>MSNSMRDLIDGEAELDDEEDDESFDEEAGDRPRRRPNIDDSSEEEEDDEDEEEARKIREGFIVDEDEEDEAEDSDARERRRRKKRRREREEEEQLDEEDLDLIGEAIPEWERKPQPQRLKRGHRDDHRPTERRGLAEIFSDEDEEHDDRGYGRPSGRAQADEFDDFIEDDYPEDDEERRHREEDEEVARPKDRGLNIDTTGLDKDALEDMDAIFGNGEDYEWALQLEEEQEHAERTKEDIELQDVFEPSQLKEKLLTDEDNRIRFNDEPERFQLDRKAFKNLQMTSDQFKEEARWISNLMLPSKNLSSELHGPFNKAVGKVLEFFVIDGVEVPYVFQHRRDYLIHAKKMRNPNRRDDPDAPEYTVDAEKLLTQDDLWKVLDLDIRFRSFLEKRNALEQTYDKLKEKTRDDILEEMIRQAQSIEELQDLQDYLNFQYSAELKDLAANDNSAQREIKRAGGRTAQFERIRRSNAYKFVQALGITPDRLAKNILRESSKVTSEDDSRLPDDLADTLVDADFPTGELVINAARQMLAEEMFASPRMRKHFRKNFYGMGIVSCRRTDKGLRKIDEANPYYEVKYLKNMSIADLAVRPELFLKMMKAEEEGLIEIKVSLENDREFRQQLFSDFASENFSELADKWNAERQKVIDLAFDKLVKVIVKGVKDSLRTACQDELLKTCRELYFKRLDQAPYKPKGMVIGTTPRVLTLSNGMGDPNREPVSWVSMDEDGRILEHGTFTNLARDESQREALAELVRRRQPDVIGISGFSADTHRLIKDVEGLVSEKGLVGPEYDDPETNEYRSDLLEVIVINDEVARLYKDSPRAVADHPSLNPMTRYCIALARYMQNPMKEYAALGKDVTSLQIHPYQQYLPQAKLLKHLETAMVDMVNLVGVDINVAMQDANTAHLLPYVAGLGPRKAQLLIKGINKNGGVVTSRDELVGDPERHKLPVLGPRVWNNCASFLFIEYEPTNPESDPLDNTRIHPEDYDLARKVAADALGLDEEDVKAETDENGAGAIVRKLFKDDEQDKVNELILEEYAEQLEREYQQRKRATLETIRAELQVPYEELRKKFESLTVDQVFTMLTGENRDSLCEGMIVAANVRVVKDDFAIVKLDCGIEGRIESHDVSYRHSIKDVLHVGQVVQAKLIDLNRKEFVSKLSMRDEEMRRPFRRHFDHGRDQWDYRKEDEDREELREKDKSTGRAQRVVNHPLFKPFNSTQAEEYLGSQPSGEVVIRPSSKGNDHLAVTWKVADGVFQHVDVLELQKENEFAVGRVLRVGKYTYQDLDELIVDHVKAMAKKVDELMQCDKFQKGSRNETEKWLTTYMDANPNRSTYAFCIDTKHPGYFFLCFKASRNSRVNAWPVRVIPHAFELMKSQYPDVRALCNGFKLRYQSEMLKQQSGGR</sequence>
<gene>
    <name type="primary">spt-6</name>
    <name type="ORF">NCU04611</name>
</gene>
<proteinExistence type="inferred from homology"/>
<accession>Q8NIV6</accession>
<accession>Q7S2H2</accession>
<evidence type="ECO:0000250" key="1">
    <source>
        <dbReference type="UniProtKB" id="P23615"/>
    </source>
</evidence>
<evidence type="ECO:0000255" key="2">
    <source>
        <dbReference type="PROSITE-ProRule" id="PRU00180"/>
    </source>
</evidence>
<evidence type="ECO:0000256" key="3">
    <source>
        <dbReference type="SAM" id="MobiDB-lite"/>
    </source>
</evidence>
<evidence type="ECO:0000305" key="4"/>
<reference key="1">
    <citation type="journal article" date="2003" name="Nature">
        <title>The genome sequence of the filamentous fungus Neurospora crassa.</title>
        <authorList>
            <person name="Galagan J.E."/>
            <person name="Calvo S.E."/>
            <person name="Borkovich K.A."/>
            <person name="Selker E.U."/>
            <person name="Read N.D."/>
            <person name="Jaffe D.B."/>
            <person name="FitzHugh W."/>
            <person name="Ma L.-J."/>
            <person name="Smirnov S."/>
            <person name="Purcell S."/>
            <person name="Rehman B."/>
            <person name="Elkins T."/>
            <person name="Engels R."/>
            <person name="Wang S."/>
            <person name="Nielsen C.B."/>
            <person name="Butler J."/>
            <person name="Endrizzi M."/>
            <person name="Qui D."/>
            <person name="Ianakiev P."/>
            <person name="Bell-Pedersen D."/>
            <person name="Nelson M.A."/>
            <person name="Werner-Washburne M."/>
            <person name="Selitrennikoff C.P."/>
            <person name="Kinsey J.A."/>
            <person name="Braun E.L."/>
            <person name="Zelter A."/>
            <person name="Schulte U."/>
            <person name="Kothe G.O."/>
            <person name="Jedd G."/>
            <person name="Mewes H.-W."/>
            <person name="Staben C."/>
            <person name="Marcotte E."/>
            <person name="Greenberg D."/>
            <person name="Roy A."/>
            <person name="Foley K."/>
            <person name="Naylor J."/>
            <person name="Stange-Thomann N."/>
            <person name="Barrett R."/>
            <person name="Gnerre S."/>
            <person name="Kamal M."/>
            <person name="Kamvysselis M."/>
            <person name="Mauceli E.W."/>
            <person name="Bielke C."/>
            <person name="Rudd S."/>
            <person name="Frishman D."/>
            <person name="Krystofova S."/>
            <person name="Rasmussen C."/>
            <person name="Metzenberg R.L."/>
            <person name="Perkins D.D."/>
            <person name="Kroken S."/>
            <person name="Cogoni C."/>
            <person name="Macino G."/>
            <person name="Catcheside D.E.A."/>
            <person name="Li W."/>
            <person name="Pratt R.J."/>
            <person name="Osmani S.A."/>
            <person name="DeSouza C.P.C."/>
            <person name="Glass N.L."/>
            <person name="Orbach M.J."/>
            <person name="Berglund J.A."/>
            <person name="Voelker R."/>
            <person name="Yarden O."/>
            <person name="Plamann M."/>
            <person name="Seiler S."/>
            <person name="Dunlap J.C."/>
            <person name="Radford A."/>
            <person name="Aramayo R."/>
            <person name="Natvig D.O."/>
            <person name="Alex L.A."/>
            <person name="Mannhaupt G."/>
            <person name="Ebbole D.J."/>
            <person name="Freitag M."/>
            <person name="Paulsen I."/>
            <person name="Sachs M.S."/>
            <person name="Lander E.S."/>
            <person name="Nusbaum C."/>
            <person name="Birren B.W."/>
        </authorList>
    </citation>
    <scope>NUCLEOTIDE SEQUENCE [LARGE SCALE GENOMIC DNA]</scope>
    <source>
        <strain>ATCC 24698 / 74-OR23-1A / CBS 708.71 / DSM 1257 / FGSC 987</strain>
    </source>
</reference>
<keyword id="KW-0158">Chromosome</keyword>
<keyword id="KW-0539">Nucleus</keyword>
<keyword id="KW-1185">Reference proteome</keyword>
<keyword id="KW-0727">SH2 domain</keyword>
<keyword id="KW-0804">Transcription</keyword>
<name>SPT6_NEUCR</name>
<protein>
    <recommendedName>
        <fullName>Transcription elongation factor spt-6</fullName>
    </recommendedName>
    <alternativeName>
        <fullName>Chromatin elongation factor spt-6</fullName>
    </alternativeName>
</protein>